<keyword id="KW-0030">Aminoacyl-tRNA synthetase</keyword>
<keyword id="KW-0067">ATP-binding</keyword>
<keyword id="KW-0963">Cytoplasm</keyword>
<keyword id="KW-0436">Ligase</keyword>
<keyword id="KW-0460">Magnesium</keyword>
<keyword id="KW-0479">Metal-binding</keyword>
<keyword id="KW-0547">Nucleotide-binding</keyword>
<keyword id="KW-0648">Protein biosynthesis</keyword>
<organism>
    <name type="scientific">Bacillus cereus (strain Q1)</name>
    <dbReference type="NCBI Taxonomy" id="361100"/>
    <lineage>
        <taxon>Bacteria</taxon>
        <taxon>Bacillati</taxon>
        <taxon>Bacillota</taxon>
        <taxon>Bacilli</taxon>
        <taxon>Bacillales</taxon>
        <taxon>Bacillaceae</taxon>
        <taxon>Bacillus</taxon>
        <taxon>Bacillus cereus group</taxon>
    </lineage>
</organism>
<name>SYFA_BACCQ</name>
<reference key="1">
    <citation type="journal article" date="2009" name="J. Bacteriol.">
        <title>Complete genome sequence of the extremophilic Bacillus cereus strain Q1 with industrial applications.</title>
        <authorList>
            <person name="Xiong Z."/>
            <person name="Jiang Y."/>
            <person name="Qi D."/>
            <person name="Lu H."/>
            <person name="Yang F."/>
            <person name="Yang J."/>
            <person name="Chen L."/>
            <person name="Sun L."/>
            <person name="Xu X."/>
            <person name="Xue Y."/>
            <person name="Zhu Y."/>
            <person name="Jin Q."/>
        </authorList>
    </citation>
    <scope>NUCLEOTIDE SEQUENCE [LARGE SCALE GENOMIC DNA]</scope>
    <source>
        <strain>Q1</strain>
    </source>
</reference>
<sequence>MEARLKELKQKALELIEEAKELKGLNDVRVAYLGKKGPITEVLRGMGKLSAEERPRMGALVNEVREAIQTRLDDKISNLEKAVIEAKLATETIDVTLPGRPVETGCHHPLTAVVEQIEDVFIGMGYEVAEGTEVEKDYYNFEALNLPKDHPARDMQDTFYITEETLLRTHTSSVQARTMENNKEKGPIKIICPGKVYRRDDDDATHSHQFMQIEGLVIDKNIRMSDLKGTLQVFVKKMFGEDREIRLRPSFFPFTEPSVEMDISCMMCHGKGCGTCKGTGWIEILGAGMVHPNVLEMAGYDSKEYQGFAFGMGAERIAMLKYGVDDIRHFYTNDVRFLQQFKRA</sequence>
<protein>
    <recommendedName>
        <fullName evidence="1">Phenylalanine--tRNA ligase alpha subunit</fullName>
        <ecNumber evidence="1">6.1.1.20</ecNumber>
    </recommendedName>
    <alternativeName>
        <fullName evidence="1">Phenylalanyl-tRNA synthetase alpha subunit</fullName>
        <shortName evidence="1">PheRS</shortName>
    </alternativeName>
</protein>
<comment type="catalytic activity">
    <reaction evidence="1">
        <text>tRNA(Phe) + L-phenylalanine + ATP = L-phenylalanyl-tRNA(Phe) + AMP + diphosphate + H(+)</text>
        <dbReference type="Rhea" id="RHEA:19413"/>
        <dbReference type="Rhea" id="RHEA-COMP:9668"/>
        <dbReference type="Rhea" id="RHEA-COMP:9699"/>
        <dbReference type="ChEBI" id="CHEBI:15378"/>
        <dbReference type="ChEBI" id="CHEBI:30616"/>
        <dbReference type="ChEBI" id="CHEBI:33019"/>
        <dbReference type="ChEBI" id="CHEBI:58095"/>
        <dbReference type="ChEBI" id="CHEBI:78442"/>
        <dbReference type="ChEBI" id="CHEBI:78531"/>
        <dbReference type="ChEBI" id="CHEBI:456215"/>
        <dbReference type="EC" id="6.1.1.20"/>
    </reaction>
</comment>
<comment type="cofactor">
    <cofactor evidence="1">
        <name>Mg(2+)</name>
        <dbReference type="ChEBI" id="CHEBI:18420"/>
    </cofactor>
    <text evidence="1">Binds 2 magnesium ions per tetramer.</text>
</comment>
<comment type="subunit">
    <text evidence="1">Tetramer of two alpha and two beta subunits.</text>
</comment>
<comment type="subcellular location">
    <subcellularLocation>
        <location evidence="1">Cytoplasm</location>
    </subcellularLocation>
</comment>
<comment type="similarity">
    <text evidence="1">Belongs to the class-II aminoacyl-tRNA synthetase family. Phe-tRNA synthetase alpha subunit type 1 subfamily.</text>
</comment>
<proteinExistence type="inferred from homology"/>
<evidence type="ECO:0000255" key="1">
    <source>
        <dbReference type="HAMAP-Rule" id="MF_00281"/>
    </source>
</evidence>
<dbReference type="EC" id="6.1.1.20" evidence="1"/>
<dbReference type="EMBL" id="CP000227">
    <property type="protein sequence ID" value="ACM14793.1"/>
    <property type="molecule type" value="Genomic_DNA"/>
</dbReference>
<dbReference type="SMR" id="B9J063"/>
<dbReference type="KEGG" id="bcq:BCQ_4367"/>
<dbReference type="HOGENOM" id="CLU_025086_0_1_9"/>
<dbReference type="Proteomes" id="UP000000441">
    <property type="component" value="Chromosome"/>
</dbReference>
<dbReference type="GO" id="GO:0005737">
    <property type="term" value="C:cytoplasm"/>
    <property type="evidence" value="ECO:0007669"/>
    <property type="project" value="UniProtKB-SubCell"/>
</dbReference>
<dbReference type="GO" id="GO:0005524">
    <property type="term" value="F:ATP binding"/>
    <property type="evidence" value="ECO:0007669"/>
    <property type="project" value="UniProtKB-UniRule"/>
</dbReference>
<dbReference type="GO" id="GO:0140096">
    <property type="term" value="F:catalytic activity, acting on a protein"/>
    <property type="evidence" value="ECO:0007669"/>
    <property type="project" value="UniProtKB-ARBA"/>
</dbReference>
<dbReference type="GO" id="GO:0000287">
    <property type="term" value="F:magnesium ion binding"/>
    <property type="evidence" value="ECO:0007669"/>
    <property type="project" value="UniProtKB-UniRule"/>
</dbReference>
<dbReference type="GO" id="GO:0004826">
    <property type="term" value="F:phenylalanine-tRNA ligase activity"/>
    <property type="evidence" value="ECO:0007669"/>
    <property type="project" value="UniProtKB-UniRule"/>
</dbReference>
<dbReference type="GO" id="GO:0016740">
    <property type="term" value="F:transferase activity"/>
    <property type="evidence" value="ECO:0007669"/>
    <property type="project" value="UniProtKB-ARBA"/>
</dbReference>
<dbReference type="GO" id="GO:0000049">
    <property type="term" value="F:tRNA binding"/>
    <property type="evidence" value="ECO:0007669"/>
    <property type="project" value="InterPro"/>
</dbReference>
<dbReference type="GO" id="GO:0006432">
    <property type="term" value="P:phenylalanyl-tRNA aminoacylation"/>
    <property type="evidence" value="ECO:0007669"/>
    <property type="project" value="UniProtKB-UniRule"/>
</dbReference>
<dbReference type="CDD" id="cd00496">
    <property type="entry name" value="PheRS_alpha_core"/>
    <property type="match status" value="1"/>
</dbReference>
<dbReference type="FunFam" id="3.30.930.10:FF:000003">
    <property type="entry name" value="Phenylalanine--tRNA ligase alpha subunit"/>
    <property type="match status" value="1"/>
</dbReference>
<dbReference type="Gene3D" id="3.30.930.10">
    <property type="entry name" value="Bira Bifunctional Protein, Domain 2"/>
    <property type="match status" value="1"/>
</dbReference>
<dbReference type="HAMAP" id="MF_00281">
    <property type="entry name" value="Phe_tRNA_synth_alpha1"/>
    <property type="match status" value="1"/>
</dbReference>
<dbReference type="InterPro" id="IPR006195">
    <property type="entry name" value="aa-tRNA-synth_II"/>
</dbReference>
<dbReference type="InterPro" id="IPR045864">
    <property type="entry name" value="aa-tRNA-synth_II/BPL/LPL"/>
</dbReference>
<dbReference type="InterPro" id="IPR004529">
    <property type="entry name" value="Phe-tRNA-synth_IIc_asu"/>
</dbReference>
<dbReference type="InterPro" id="IPR004188">
    <property type="entry name" value="Phe-tRNA_ligase_II_N"/>
</dbReference>
<dbReference type="InterPro" id="IPR022911">
    <property type="entry name" value="Phe_tRNA_ligase_alpha1_bac"/>
</dbReference>
<dbReference type="InterPro" id="IPR002319">
    <property type="entry name" value="Phenylalanyl-tRNA_Synthase"/>
</dbReference>
<dbReference type="InterPro" id="IPR010978">
    <property type="entry name" value="tRNA-bd_arm"/>
</dbReference>
<dbReference type="NCBIfam" id="TIGR00468">
    <property type="entry name" value="pheS"/>
    <property type="match status" value="1"/>
</dbReference>
<dbReference type="PANTHER" id="PTHR11538:SF41">
    <property type="entry name" value="PHENYLALANINE--TRNA LIGASE, MITOCHONDRIAL"/>
    <property type="match status" value="1"/>
</dbReference>
<dbReference type="PANTHER" id="PTHR11538">
    <property type="entry name" value="PHENYLALANYL-TRNA SYNTHETASE"/>
    <property type="match status" value="1"/>
</dbReference>
<dbReference type="Pfam" id="PF02912">
    <property type="entry name" value="Phe_tRNA-synt_N"/>
    <property type="match status" value="1"/>
</dbReference>
<dbReference type="Pfam" id="PF01409">
    <property type="entry name" value="tRNA-synt_2d"/>
    <property type="match status" value="1"/>
</dbReference>
<dbReference type="SUPFAM" id="SSF55681">
    <property type="entry name" value="Class II aaRS and biotin synthetases"/>
    <property type="match status" value="1"/>
</dbReference>
<dbReference type="SUPFAM" id="SSF46589">
    <property type="entry name" value="tRNA-binding arm"/>
    <property type="match status" value="1"/>
</dbReference>
<dbReference type="PROSITE" id="PS50862">
    <property type="entry name" value="AA_TRNA_LIGASE_II"/>
    <property type="match status" value="1"/>
</dbReference>
<accession>B9J063</accession>
<gene>
    <name evidence="1" type="primary">pheS</name>
    <name type="ordered locus">BCQ_4367</name>
</gene>
<feature type="chain" id="PRO_1000199298" description="Phenylalanine--tRNA ligase alpha subunit">
    <location>
        <begin position="1"/>
        <end position="344"/>
    </location>
</feature>
<feature type="binding site" evidence="1">
    <location>
        <position position="256"/>
    </location>
    <ligand>
        <name>Mg(2+)</name>
        <dbReference type="ChEBI" id="CHEBI:18420"/>
        <note>shared with beta subunit</note>
    </ligand>
</feature>